<organism>
    <name type="scientific">Oryza sativa subsp. japonica</name>
    <name type="common">Rice</name>
    <dbReference type="NCBI Taxonomy" id="39947"/>
    <lineage>
        <taxon>Eukaryota</taxon>
        <taxon>Viridiplantae</taxon>
        <taxon>Streptophyta</taxon>
        <taxon>Embryophyta</taxon>
        <taxon>Tracheophyta</taxon>
        <taxon>Spermatophyta</taxon>
        <taxon>Magnoliopsida</taxon>
        <taxon>Liliopsida</taxon>
        <taxon>Poales</taxon>
        <taxon>Poaceae</taxon>
        <taxon>BOP clade</taxon>
        <taxon>Oryzoideae</taxon>
        <taxon>Oryzeae</taxon>
        <taxon>Oryzinae</taxon>
        <taxon>Oryza</taxon>
        <taxon>Oryza sativa</taxon>
    </lineage>
</organism>
<protein>
    <recommendedName>
        <fullName>Formin-like protein 8</fullName>
    </recommendedName>
    <alternativeName>
        <fullName>OsFH8</fullName>
    </alternativeName>
</protein>
<evidence type="ECO:0000255" key="1"/>
<evidence type="ECO:0000255" key="2">
    <source>
        <dbReference type="PROSITE-ProRule" id="PRU00774"/>
    </source>
</evidence>
<evidence type="ECO:0000256" key="3">
    <source>
        <dbReference type="SAM" id="MobiDB-lite"/>
    </source>
</evidence>
<evidence type="ECO:0000305" key="4"/>
<feature type="signal peptide" evidence="1">
    <location>
        <begin position="1"/>
        <end position="23"/>
    </location>
</feature>
<feature type="chain" id="PRO_0000318998" description="Formin-like protein 8">
    <location>
        <begin position="24"/>
        <end position="892"/>
    </location>
</feature>
<feature type="transmembrane region" description="Helical" evidence="1">
    <location>
        <begin position="126"/>
        <end position="146"/>
    </location>
</feature>
<feature type="domain" description="FH2" evidence="2">
    <location>
        <begin position="446"/>
        <end position="867"/>
    </location>
</feature>
<feature type="region of interest" description="Disordered" evidence="3">
    <location>
        <begin position="43"/>
        <end position="119"/>
    </location>
</feature>
<feature type="region of interest" description="Disordered" evidence="3">
    <location>
        <begin position="188"/>
        <end position="457"/>
    </location>
</feature>
<feature type="compositionally biased region" description="Pro residues" evidence="3">
    <location>
        <begin position="47"/>
        <end position="59"/>
    </location>
</feature>
<feature type="compositionally biased region" description="Low complexity" evidence="3">
    <location>
        <begin position="87"/>
        <end position="111"/>
    </location>
</feature>
<feature type="compositionally biased region" description="Basic and acidic residues" evidence="3">
    <location>
        <begin position="210"/>
        <end position="230"/>
    </location>
</feature>
<feature type="compositionally biased region" description="Low complexity" evidence="3">
    <location>
        <begin position="268"/>
        <end position="286"/>
    </location>
</feature>
<feature type="compositionally biased region" description="Low complexity" evidence="3">
    <location>
        <begin position="297"/>
        <end position="306"/>
    </location>
</feature>
<feature type="compositionally biased region" description="Low complexity" evidence="3">
    <location>
        <begin position="321"/>
        <end position="330"/>
    </location>
</feature>
<feature type="compositionally biased region" description="Pro residues" evidence="3">
    <location>
        <begin position="339"/>
        <end position="383"/>
    </location>
</feature>
<feature type="compositionally biased region" description="Polar residues" evidence="3">
    <location>
        <begin position="424"/>
        <end position="436"/>
    </location>
</feature>
<feature type="sequence conflict" description="In Ref. 5; AK121042." evidence="4" ref="5">
    <original>P</original>
    <variation>L</variation>
    <location>
        <position position="408"/>
    </location>
</feature>
<accession>Q10Q99</accession>
<accession>A0A0P0VUD6</accession>
<gene>
    <name type="primary">FH8</name>
    <name type="ordered locus">Os03g0204100</name>
    <name type="ordered locus">LOC_Os03g10680</name>
</gene>
<name>FH8_ORYSJ</name>
<comment type="subcellular location">
    <subcellularLocation>
        <location evidence="4">Membrane</location>
        <topology evidence="4">Single-pass membrane protein</topology>
    </subcellularLocation>
</comment>
<comment type="similarity">
    <text evidence="4">Belongs to the formin-like family. Class-I subfamily.</text>
</comment>
<proteinExistence type="evidence at transcript level"/>
<dbReference type="EMBL" id="DP000009">
    <property type="protein sequence ID" value="ABF94532.1"/>
    <property type="molecule type" value="Genomic_DNA"/>
</dbReference>
<dbReference type="EMBL" id="AP008209">
    <property type="protein sequence ID" value="BAF11223.1"/>
    <property type="molecule type" value="Genomic_DNA"/>
</dbReference>
<dbReference type="EMBL" id="AP014959">
    <property type="protein sequence ID" value="BAS82845.1"/>
    <property type="molecule type" value="Genomic_DNA"/>
</dbReference>
<dbReference type="EMBL" id="AK121042">
    <property type="status" value="NOT_ANNOTATED_CDS"/>
    <property type="molecule type" value="mRNA"/>
</dbReference>
<dbReference type="RefSeq" id="XP_015628713.1">
    <property type="nucleotide sequence ID" value="XM_015773227.1"/>
</dbReference>
<dbReference type="SMR" id="Q10Q99"/>
<dbReference type="FunCoup" id="Q10Q99">
    <property type="interactions" value="177"/>
</dbReference>
<dbReference type="STRING" id="39947.Q10Q99"/>
<dbReference type="PaxDb" id="39947-Q10Q99"/>
<dbReference type="EnsemblPlants" id="Os03t0204100-01">
    <property type="protein sequence ID" value="Os03t0204100-01"/>
    <property type="gene ID" value="Os03g0204100"/>
</dbReference>
<dbReference type="Gramene" id="Os03t0204100-01">
    <property type="protein sequence ID" value="Os03t0204100-01"/>
    <property type="gene ID" value="Os03g0204100"/>
</dbReference>
<dbReference type="KEGG" id="dosa:Os03g0204100"/>
<dbReference type="eggNOG" id="KOG1922">
    <property type="taxonomic scope" value="Eukaryota"/>
</dbReference>
<dbReference type="HOGENOM" id="CLU_007699_0_0_1"/>
<dbReference type="InParanoid" id="Q10Q99"/>
<dbReference type="OMA" id="YKHRVKH"/>
<dbReference type="OrthoDB" id="1668162at2759"/>
<dbReference type="Proteomes" id="UP000000763">
    <property type="component" value="Chromosome 3"/>
</dbReference>
<dbReference type="Proteomes" id="UP000059680">
    <property type="component" value="Chromosome 3"/>
</dbReference>
<dbReference type="GO" id="GO:0005856">
    <property type="term" value="C:cytoskeleton"/>
    <property type="evidence" value="ECO:0000318"/>
    <property type="project" value="GO_Central"/>
</dbReference>
<dbReference type="GO" id="GO:0016020">
    <property type="term" value="C:membrane"/>
    <property type="evidence" value="ECO:0007669"/>
    <property type="project" value="UniProtKB-SubCell"/>
</dbReference>
<dbReference type="GO" id="GO:0051015">
    <property type="term" value="F:actin filament binding"/>
    <property type="evidence" value="ECO:0000318"/>
    <property type="project" value="GO_Central"/>
</dbReference>
<dbReference type="GO" id="GO:0030036">
    <property type="term" value="P:actin cytoskeleton organization"/>
    <property type="evidence" value="ECO:0000318"/>
    <property type="project" value="GO_Central"/>
</dbReference>
<dbReference type="GO" id="GO:0045010">
    <property type="term" value="P:actin nucleation"/>
    <property type="evidence" value="ECO:0007669"/>
    <property type="project" value="InterPro"/>
</dbReference>
<dbReference type="Gene3D" id="1.20.58.2220">
    <property type="entry name" value="Formin, FH2 domain"/>
    <property type="match status" value="1"/>
</dbReference>
<dbReference type="InterPro" id="IPR015425">
    <property type="entry name" value="FH2_Formin"/>
</dbReference>
<dbReference type="InterPro" id="IPR042201">
    <property type="entry name" value="FH2_Formin_sf"/>
</dbReference>
<dbReference type="InterPro" id="IPR027643">
    <property type="entry name" value="Formin-like_plant"/>
</dbReference>
<dbReference type="PANTHER" id="PTHR23213:SF338">
    <property type="entry name" value="FORMIN-LIKE PROTEIN 6"/>
    <property type="match status" value="1"/>
</dbReference>
<dbReference type="PANTHER" id="PTHR23213">
    <property type="entry name" value="FORMIN-RELATED"/>
    <property type="match status" value="1"/>
</dbReference>
<dbReference type="Pfam" id="PF02181">
    <property type="entry name" value="FH2"/>
    <property type="match status" value="1"/>
</dbReference>
<dbReference type="SMART" id="SM00498">
    <property type="entry name" value="FH2"/>
    <property type="match status" value="1"/>
</dbReference>
<dbReference type="SUPFAM" id="SSF101447">
    <property type="entry name" value="Formin homology 2 domain (FH2 domain)"/>
    <property type="match status" value="1"/>
</dbReference>
<dbReference type="PROSITE" id="PS51444">
    <property type="entry name" value="FH2"/>
    <property type="match status" value="1"/>
</dbReference>
<reference key="1">
    <citation type="journal article" date="2005" name="Genome Res.">
        <title>Sequence, annotation, and analysis of synteny between rice chromosome 3 and diverged grass species.</title>
        <authorList>
            <consortium name="The rice chromosome 3 sequencing consortium"/>
            <person name="Buell C.R."/>
            <person name="Yuan Q."/>
            <person name="Ouyang S."/>
            <person name="Liu J."/>
            <person name="Zhu W."/>
            <person name="Wang A."/>
            <person name="Maiti R."/>
            <person name="Haas B."/>
            <person name="Wortman J."/>
            <person name="Pertea M."/>
            <person name="Jones K.M."/>
            <person name="Kim M."/>
            <person name="Overton L."/>
            <person name="Tsitrin T."/>
            <person name="Fadrosh D."/>
            <person name="Bera J."/>
            <person name="Weaver B."/>
            <person name="Jin S."/>
            <person name="Johri S."/>
            <person name="Reardon M."/>
            <person name="Webb K."/>
            <person name="Hill J."/>
            <person name="Moffat K."/>
            <person name="Tallon L."/>
            <person name="Van Aken S."/>
            <person name="Lewis M."/>
            <person name="Utterback T."/>
            <person name="Feldblyum T."/>
            <person name="Zismann V."/>
            <person name="Iobst S."/>
            <person name="Hsiao J."/>
            <person name="de Vazeille A.R."/>
            <person name="Salzberg S.L."/>
            <person name="White O."/>
            <person name="Fraser C.M."/>
            <person name="Yu Y."/>
            <person name="Kim H."/>
            <person name="Rambo T."/>
            <person name="Currie J."/>
            <person name="Collura K."/>
            <person name="Kernodle-Thompson S."/>
            <person name="Wei F."/>
            <person name="Kudrna K."/>
            <person name="Ammiraju J.S.S."/>
            <person name="Luo M."/>
            <person name="Goicoechea J.L."/>
            <person name="Wing R.A."/>
            <person name="Henry D."/>
            <person name="Oates R."/>
            <person name="Palmer M."/>
            <person name="Pries G."/>
            <person name="Saski C."/>
            <person name="Simmons J."/>
            <person name="Soderlund C."/>
            <person name="Nelson W."/>
            <person name="de la Bastide M."/>
            <person name="Spiegel L."/>
            <person name="Nascimento L."/>
            <person name="Huang E."/>
            <person name="Preston R."/>
            <person name="Zutavern T."/>
            <person name="Palmer L."/>
            <person name="O'Shaughnessy A."/>
            <person name="Dike S."/>
            <person name="McCombie W.R."/>
            <person name="Minx P."/>
            <person name="Cordum H."/>
            <person name="Wilson R."/>
            <person name="Jin W."/>
            <person name="Lee H.R."/>
            <person name="Jiang J."/>
            <person name="Jackson S."/>
        </authorList>
    </citation>
    <scope>NUCLEOTIDE SEQUENCE [LARGE SCALE GENOMIC DNA]</scope>
    <source>
        <strain>cv. Nipponbare</strain>
    </source>
</reference>
<reference key="2">
    <citation type="journal article" date="2005" name="Nature">
        <title>The map-based sequence of the rice genome.</title>
        <authorList>
            <consortium name="International rice genome sequencing project (IRGSP)"/>
        </authorList>
    </citation>
    <scope>NUCLEOTIDE SEQUENCE [LARGE SCALE GENOMIC DNA]</scope>
    <source>
        <strain>cv. Nipponbare</strain>
    </source>
</reference>
<reference key="3">
    <citation type="journal article" date="2008" name="Nucleic Acids Res.">
        <title>The rice annotation project database (RAP-DB): 2008 update.</title>
        <authorList>
            <consortium name="The rice annotation project (RAP)"/>
        </authorList>
    </citation>
    <scope>GENOME REANNOTATION</scope>
    <source>
        <strain>cv. Nipponbare</strain>
    </source>
</reference>
<reference key="4">
    <citation type="journal article" date="2013" name="Rice">
        <title>Improvement of the Oryza sativa Nipponbare reference genome using next generation sequence and optical map data.</title>
        <authorList>
            <person name="Kawahara Y."/>
            <person name="de la Bastide M."/>
            <person name="Hamilton J.P."/>
            <person name="Kanamori H."/>
            <person name="McCombie W.R."/>
            <person name="Ouyang S."/>
            <person name="Schwartz D.C."/>
            <person name="Tanaka T."/>
            <person name="Wu J."/>
            <person name="Zhou S."/>
            <person name="Childs K.L."/>
            <person name="Davidson R.M."/>
            <person name="Lin H."/>
            <person name="Quesada-Ocampo L."/>
            <person name="Vaillancourt B."/>
            <person name="Sakai H."/>
            <person name="Lee S.S."/>
            <person name="Kim J."/>
            <person name="Numa H."/>
            <person name="Itoh T."/>
            <person name="Buell C.R."/>
            <person name="Matsumoto T."/>
        </authorList>
    </citation>
    <scope>GENOME REANNOTATION</scope>
    <source>
        <strain>cv. Nipponbare</strain>
    </source>
</reference>
<reference key="5">
    <citation type="journal article" date="2003" name="Science">
        <title>Collection, mapping, and annotation of over 28,000 cDNA clones from japonica rice.</title>
        <authorList>
            <consortium name="The rice full-length cDNA consortium"/>
        </authorList>
    </citation>
    <scope>NUCLEOTIDE SEQUENCE [LARGE SCALE MRNA]</scope>
    <source>
        <strain>cv. Nipponbare</strain>
    </source>
</reference>
<reference key="6">
    <citation type="journal article" date="2004" name="BMC Genomics">
        <title>Formin homology 2 domains occur in multiple contexts in angiosperms.</title>
        <authorList>
            <person name="Cvrckova F."/>
            <person name="Novotny M."/>
            <person name="Pickova D."/>
            <person name="Zarsky V."/>
        </authorList>
    </citation>
    <scope>GENE FAMILY</scope>
    <scope>NOMENCLATURE</scope>
</reference>
<keyword id="KW-0472">Membrane</keyword>
<keyword id="KW-1185">Reference proteome</keyword>
<keyword id="KW-0732">Signal</keyword>
<keyword id="KW-0812">Transmembrane</keyword>
<keyword id="KW-1133">Transmembrane helix</keyword>
<sequence>MPPAIARFVAIAAVLLCGHVAVAAESGGVGGGSARRVLHQPLFPIEWTPPPSPPPPPAPDFTSDPSTPPAPDAPSGDFFPPAPPTTTTPTSPGTTPSPTTVAADVSKTPSGSGSGHHGGGPTKATIVAAGAGAAAAVALLGFACAFLITGRARRRGDSQKLLGPDRAGAHRSAATSAADFLYVGTVEPTTPARHHGPTTADLVGSPYRKLRSERARRGVSRDEDADHPSPELRPLPPLRRAATLGSSDEDGYYTPRQLSGGSGGGGAAEAWSSASASSPPTTTTASRRSLPSMTSDFFPPVAAIAAPPAPPPARSRRTPPRTRFSTGSTPDTKQVTSPSPRPVQPSNAPPPPPPPPPPPPPPPPPKLNTAPKPPPPPPPPPSVPSNNNLPKPAEPPAVPTSRRRLLKPLPPEGPRIAMPMPITAATTVDNNGSTSMREGDNAAADDGGSGEPRPKLKPLHWDKVRATSDRAMVWDQLKSSSFQLDEDMIEALFMNNSTPAAPPREVGRKAAGVPSFRQEERVLDPKKAQNIAILLRALNVTREEVSDALLDGNAECLGSELLETLVKMAPTKEEELKLRDYSGDLSKLGSAERFLKAVLDIPFAFKRVDAMLYRANFETEINYLRNSFETLEAACEDLRGSRLFLKLLEAVLRTGNRMNVGTNRGEAKAFKLDTLLKLADVKGTDGKTTLLHFVVQEIIRSEDAKSEKESAMISSSKDDRKHGLKVVSGLSSELGNVKKAATMDFDVLHGYVNKLETGLEKIKSVLQLEKKCTQGQRFFMSMQDFLKEAEREIERVRGEERRALGRVKDITEYFHGDTAKEEAHPLRIFMVVRDFLSTLDQVCREVGRMQQDRTVIGGSARSFRISATSSLPVLSLYGQRRENNSDDDSSSS</sequence>